<keyword id="KW-1003">Cell membrane</keyword>
<keyword id="KW-0297">G-protein coupled receptor</keyword>
<keyword id="KW-0472">Membrane</keyword>
<keyword id="KW-0675">Receptor</keyword>
<keyword id="KW-1185">Reference proteome</keyword>
<keyword id="KW-0807">Transducer</keyword>
<keyword id="KW-0812">Transmembrane</keyword>
<keyword id="KW-1133">Transmembrane helix</keyword>
<comment type="function">
    <text evidence="1">Mast cell-specific receptor for basic secretagogues, i.e. cationic amphiphilic drugs, as well as endo- or exogenous peptides, consisting of a basic head group and a hydrophobic core. Recognizes and binds small molecules containing a cyclized tetrahydroisoquinoline (THIQ), such as non-steroidal neuromuscular blocking drugs (NMBDs), including tubocurarine and atracurium. In response to these compounds, mediates pseudo-allergic reactions characterized by histamine release, inflammation and airway contraction.</text>
</comment>
<comment type="subcellular location">
    <subcellularLocation>
        <location evidence="2">Cell membrane</location>
        <topology evidence="2">Multi-pass membrane protein</topology>
    </subcellularLocation>
</comment>
<comment type="similarity">
    <text evidence="3">Belongs to the G-protein coupled receptor 1 family. Mas subfamily.</text>
</comment>
<gene>
    <name type="primary">MRGPRX2</name>
    <name type="synonym">MRGX2</name>
</gene>
<protein>
    <recommendedName>
        <fullName>Mas-related G-protein coupled receptor member X2</fullName>
    </recommendedName>
</protein>
<feature type="chain" id="PRO_0000069777" description="Mas-related G-protein coupled receptor member X2">
    <location>
        <begin position="1"/>
        <end position="329"/>
    </location>
</feature>
<feature type="topological domain" description="Extracellular" evidence="2">
    <location>
        <begin position="1"/>
        <end position="33"/>
    </location>
</feature>
<feature type="transmembrane region" description="Helical; Name=1" evidence="2">
    <location>
        <begin position="34"/>
        <end position="54"/>
    </location>
</feature>
<feature type="topological domain" description="Cytoplasmic" evidence="2">
    <location>
        <begin position="55"/>
        <end position="63"/>
    </location>
</feature>
<feature type="transmembrane region" description="Helical; Name=2" evidence="2">
    <location>
        <begin position="64"/>
        <end position="84"/>
    </location>
</feature>
<feature type="topological domain" description="Extracellular" evidence="2">
    <location>
        <begin position="85"/>
        <end position="96"/>
    </location>
</feature>
<feature type="transmembrane region" description="Helical; Name=3" evidence="2">
    <location>
        <begin position="97"/>
        <end position="116"/>
    </location>
</feature>
<feature type="topological domain" description="Cytoplasmic" evidence="2">
    <location>
        <begin position="117"/>
        <end position="143"/>
    </location>
</feature>
<feature type="transmembrane region" description="Helical; Name=4" evidence="2">
    <location>
        <begin position="144"/>
        <end position="164"/>
    </location>
</feature>
<feature type="topological domain" description="Extracellular" evidence="2">
    <location>
        <begin position="165"/>
        <end position="183"/>
    </location>
</feature>
<feature type="transmembrane region" description="Helical; Name=5" evidence="2">
    <location>
        <begin position="184"/>
        <end position="204"/>
    </location>
</feature>
<feature type="topological domain" description="Cytoplasmic" evidence="2">
    <location>
        <begin position="205"/>
        <end position="227"/>
    </location>
</feature>
<feature type="transmembrane region" description="Helical; Name=6" evidence="2">
    <location>
        <begin position="228"/>
        <end position="248"/>
    </location>
</feature>
<feature type="topological domain" description="Extracellular" evidence="2">
    <location>
        <begin position="249"/>
        <end position="263"/>
    </location>
</feature>
<feature type="transmembrane region" description="Helical; Name=7" evidence="2">
    <location>
        <begin position="264"/>
        <end position="284"/>
    </location>
</feature>
<feature type="topological domain" description="Cytoplasmic" evidence="2">
    <location>
        <begin position="285"/>
        <end position="329"/>
    </location>
</feature>
<reference key="1">
    <citation type="journal article" date="2005" name="Gene">
        <title>Adaptive evolution of MRGX2, a human sensory neuron specific gene involved in nociception.</title>
        <authorList>
            <person name="Yang S."/>
            <person name="Liu Y."/>
            <person name="Lin A.A."/>
            <person name="Cavalli-Sforza L.L."/>
            <person name="Zhao Z."/>
            <person name="Su B."/>
        </authorList>
    </citation>
    <scope>NUCLEOTIDE SEQUENCE [GENOMIC DNA]</scope>
</reference>
<evidence type="ECO:0000250" key="1">
    <source>
        <dbReference type="UniProtKB" id="Q3KNA1"/>
    </source>
</evidence>
<evidence type="ECO:0000255" key="2"/>
<evidence type="ECO:0000255" key="3">
    <source>
        <dbReference type="PROSITE-ProRule" id="PRU00521"/>
    </source>
</evidence>
<dbReference type="EMBL" id="AY651163">
    <property type="protein sequence ID" value="AAW70076.1"/>
    <property type="molecule type" value="Genomic_DNA"/>
</dbReference>
<dbReference type="RefSeq" id="NP_001035512.1">
    <property type="nucleotide sequence ID" value="NM_001040422.1"/>
</dbReference>
<dbReference type="RefSeq" id="XP_028688336.1">
    <property type="nucleotide sequence ID" value="XM_028832503.1"/>
</dbReference>
<dbReference type="SMR" id="Q4QXU5"/>
<dbReference type="FunCoup" id="Q4QXU5">
    <property type="interactions" value="260"/>
</dbReference>
<dbReference type="ChEMBL" id="CHEMBL3831324"/>
<dbReference type="PaxDb" id="9544-ENSMMUP00000021221"/>
<dbReference type="GeneID" id="692078"/>
<dbReference type="KEGG" id="mcc:692078"/>
<dbReference type="CTD" id="117194"/>
<dbReference type="eggNOG" id="ENOG502RTWA">
    <property type="taxonomic scope" value="Eukaryota"/>
</dbReference>
<dbReference type="InParanoid" id="Q4QXU5"/>
<dbReference type="OrthoDB" id="9631784at2759"/>
<dbReference type="Proteomes" id="UP000006718">
    <property type="component" value="Unassembled WGS sequence"/>
</dbReference>
<dbReference type="GO" id="GO:0005886">
    <property type="term" value="C:plasma membrane"/>
    <property type="evidence" value="ECO:0000318"/>
    <property type="project" value="GO_Central"/>
</dbReference>
<dbReference type="GO" id="GO:0004930">
    <property type="term" value="F:G protein-coupled receptor activity"/>
    <property type="evidence" value="ECO:0000250"/>
    <property type="project" value="UniProtKB"/>
</dbReference>
<dbReference type="GO" id="GO:1990595">
    <property type="term" value="F:mast cell secretagogue receptor activity"/>
    <property type="evidence" value="ECO:0000250"/>
    <property type="project" value="UniProtKB"/>
</dbReference>
<dbReference type="GO" id="GO:0007186">
    <property type="term" value="P:G protein-coupled receptor signaling pathway"/>
    <property type="evidence" value="ECO:0000318"/>
    <property type="project" value="GO_Central"/>
</dbReference>
<dbReference type="GO" id="GO:0045576">
    <property type="term" value="P:mast cell activation"/>
    <property type="evidence" value="ECO:0000250"/>
    <property type="project" value="UniProtKB"/>
</dbReference>
<dbReference type="GO" id="GO:0043303">
    <property type="term" value="P:mast cell degranulation"/>
    <property type="evidence" value="ECO:0000250"/>
    <property type="project" value="UniProtKB"/>
</dbReference>
<dbReference type="FunFam" id="1.20.1070.10:FF:000140">
    <property type="entry name" value="Mas-related G-protein coupled receptor member X2"/>
    <property type="match status" value="1"/>
</dbReference>
<dbReference type="Gene3D" id="1.20.1070.10">
    <property type="entry name" value="Rhodopsin 7-helix transmembrane proteins"/>
    <property type="match status" value="1"/>
</dbReference>
<dbReference type="InterPro" id="IPR000276">
    <property type="entry name" value="GPCR_Rhodpsn"/>
</dbReference>
<dbReference type="InterPro" id="IPR017452">
    <property type="entry name" value="GPCR_Rhodpsn_7TM"/>
</dbReference>
<dbReference type="InterPro" id="IPR026234">
    <property type="entry name" value="MRGPCRFAMILY"/>
</dbReference>
<dbReference type="PANTHER" id="PTHR11334">
    <property type="entry name" value="MAS-RELATED G-PROTEIN COUPLED RECEPTOR"/>
    <property type="match status" value="1"/>
</dbReference>
<dbReference type="PANTHER" id="PTHR11334:SF29">
    <property type="entry name" value="MAS-RELATED G-PROTEIN COUPLED RECEPTOR MEMBER X2"/>
    <property type="match status" value="1"/>
</dbReference>
<dbReference type="Pfam" id="PF00001">
    <property type="entry name" value="7tm_1"/>
    <property type="match status" value="1"/>
</dbReference>
<dbReference type="PRINTS" id="PR00237">
    <property type="entry name" value="GPCRRHODOPSN"/>
</dbReference>
<dbReference type="PRINTS" id="PR02108">
    <property type="entry name" value="MRGPCRFAMILY"/>
</dbReference>
<dbReference type="SUPFAM" id="SSF81321">
    <property type="entry name" value="Family A G protein-coupled receptor-like"/>
    <property type="match status" value="1"/>
</dbReference>
<dbReference type="PROSITE" id="PS00237">
    <property type="entry name" value="G_PROTEIN_RECEP_F1_1"/>
    <property type="match status" value="1"/>
</dbReference>
<dbReference type="PROSITE" id="PS50262">
    <property type="entry name" value="G_PROTEIN_RECEP_F1_2"/>
    <property type="match status" value="1"/>
</dbReference>
<proteinExistence type="inferred from homology"/>
<accession>Q4QXU5</accession>
<sequence>MDPTTPAWGTESTTMNGNDQALPLLCGKETMISVFLILFIALVGLVGNAFVLWLLGFRMRRNAFSVYVLSLAGADFLFLCFQMTSCLAYLINFFGSISINIPSFFTVMTCAYLAGLSMLSAISTERCLSVLWPIWYRCRRPRHLSAVMCVLLWALSLLLSILEGKFCGFLFSDDDPGWCQTFDFITAAWLMFLFVVLCGSSLALLVRILCGSRSLPLTRLYLTILLTVLIFLLCGLPFGIQWFLILWIWKNSVVLFCHIHPISVVLSSFNSSANPIIYFFVGSFRKQWRLRQPILKLALQRALQDTAEVDHSEGCFSQGTLEMSRSSLV</sequence>
<name>MRGX2_MACMU</name>
<organism>
    <name type="scientific">Macaca mulatta</name>
    <name type="common">Rhesus macaque</name>
    <dbReference type="NCBI Taxonomy" id="9544"/>
    <lineage>
        <taxon>Eukaryota</taxon>
        <taxon>Metazoa</taxon>
        <taxon>Chordata</taxon>
        <taxon>Craniata</taxon>
        <taxon>Vertebrata</taxon>
        <taxon>Euteleostomi</taxon>
        <taxon>Mammalia</taxon>
        <taxon>Eutheria</taxon>
        <taxon>Euarchontoglires</taxon>
        <taxon>Primates</taxon>
        <taxon>Haplorrhini</taxon>
        <taxon>Catarrhini</taxon>
        <taxon>Cercopithecidae</taxon>
        <taxon>Cercopithecinae</taxon>
        <taxon>Macaca</taxon>
    </lineage>
</organism>